<accession>P96177</accession>
<sequence length="1046" mass="117107">RIRYKGIVCDRCGVEVTSAKVRRERMGHIELAAPVSHIWYFKGIPSRMGLVLDMSPRSLEEVIYFASYVVTKPGDTSLTEKQLLSEREYRQLKAEYGNAFEAGMGAEAVQTLLSNVDLEEEVTELKAQLREATGQKRVRAVRRLDIIEAFVKSGNKPEWMVMDVIPIIPPDLRPMVQLEGGRFATSDLNDLYRRVINRNNRLKRLLELNAPGIIVQNEKRMLQEAADALVDNGRRGRPVTGPGNRPLKSLSHMLKGKQGRFRQDLLGKRVDYSGRSVIDVGPFLKMNQMGLPRPMAMELFRPFIMKELVKRDLAGNIRAAKRKIDRHDEDVMDVLEDVIKEHPVLLNRAPTLHRLGIQAFEPVLVSGKAMRLHPLVTEAYNADFDGDQMAIHVPLSDEAQAEARLLMLAAGHILAPKDGKPIVAPSQDMVIGNYYLTTEEAGREGEGMIFKDVNEVRTAYQNKYVHLHTRIGIQTASLSAEKPFTAEQRSRIMMTSVGKLFFNDILPADFPYLNEPTEANLHEIDNRFFLEPGEDIKARYAETPILPPFKKGYLSDIIAEVYKIYKVTETSLLLDRMKDLGYDESTKSGLTVGVADVTDLKEKPEIIEDAHKQVATVTKQFRRGLITDSERYERVIAIWNKAKDDITEKLIEHFEPDNNIFMMSDSGARGNISNFTQLAGMRGLMAAPNGRIMELPIIANFREGLSVLEMFFSTHGARKGMTDTALKTADSGYMTRRLVDVAQDVIIREDDCGSDRGLDVSAIMNGNEVIESLYERILGRYAQKSVFEPQTGDKLVGHNEMITEDIAKRIIEAGVTTVTIRSAFTCNTEHGVCVRCYGRNMATGDVVEVGEAVGTVAAQSIGEPGTQLTMRTFHTGGVAGNDITQGLPRVQEIFEARNPKGRAMITEVTGEVTTIEENPADRTKEVTIQGETDTRTYTLPMSSRMRVGEGDHIHRGETLNEGSADPKEIIQVRDTLATENYIVLEVQKVYRMQGVEISDKHIEVMARQMLRKVRVMDPGETDLLPGTLMDIAQFRDANEGTLLKGG</sequence>
<protein>
    <recommendedName>
        <fullName evidence="1">DNA-directed RNA polymerase subunit beta'</fullName>
        <shortName evidence="1">RNAP subunit beta'</shortName>
        <ecNumber evidence="1">2.7.7.6</ecNumber>
    </recommendedName>
    <alternativeName>
        <fullName evidence="1">RNA polymerase subunit beta'</fullName>
    </alternativeName>
    <alternativeName>
        <fullName evidence="1">Transcriptase subunit beta'</fullName>
    </alternativeName>
</protein>
<evidence type="ECO:0000255" key="1">
    <source>
        <dbReference type="HAMAP-Rule" id="MF_01322"/>
    </source>
</evidence>
<evidence type="ECO:0000305" key="2"/>
<name>RPOC_WEIHE</name>
<feature type="chain" id="PRO_0000067831" description="DNA-directed RNA polymerase subunit beta'">
    <location>
        <begin position="1" status="less than"/>
        <end position="1046" status="greater than"/>
    </location>
</feature>
<feature type="binding site" evidence="1">
    <location>
        <position position="383"/>
    </location>
    <ligand>
        <name>Mg(2+)</name>
        <dbReference type="ChEBI" id="CHEBI:18420"/>
    </ligand>
</feature>
<feature type="binding site" evidence="1">
    <location>
        <position position="385"/>
    </location>
    <ligand>
        <name>Mg(2+)</name>
        <dbReference type="ChEBI" id="CHEBI:18420"/>
    </ligand>
</feature>
<feature type="binding site" evidence="1">
    <location>
        <position position="387"/>
    </location>
    <ligand>
        <name>Mg(2+)</name>
        <dbReference type="ChEBI" id="CHEBI:18420"/>
    </ligand>
</feature>
<feature type="binding site" evidence="1">
    <location>
        <position position="752"/>
    </location>
    <ligand>
        <name>Zn(2+)</name>
        <dbReference type="ChEBI" id="CHEBI:29105"/>
    </ligand>
</feature>
<feature type="binding site" evidence="1">
    <location>
        <position position="826"/>
    </location>
    <ligand>
        <name>Zn(2+)</name>
        <dbReference type="ChEBI" id="CHEBI:29105"/>
    </ligand>
</feature>
<feature type="binding site" evidence="1">
    <location>
        <position position="833"/>
    </location>
    <ligand>
        <name>Zn(2+)</name>
        <dbReference type="ChEBI" id="CHEBI:29105"/>
    </ligand>
</feature>
<feature type="binding site" evidence="1">
    <location>
        <position position="836"/>
    </location>
    <ligand>
        <name>Zn(2+)</name>
        <dbReference type="ChEBI" id="CHEBI:29105"/>
    </ligand>
</feature>
<feature type="non-terminal residue">
    <location>
        <position position="1"/>
    </location>
</feature>
<feature type="non-terminal residue">
    <location>
        <position position="1046"/>
    </location>
</feature>
<keyword id="KW-0240">DNA-directed RNA polymerase</keyword>
<keyword id="KW-0460">Magnesium</keyword>
<keyword id="KW-0479">Metal-binding</keyword>
<keyword id="KW-0548">Nucleotidyltransferase</keyword>
<keyword id="KW-0804">Transcription</keyword>
<keyword id="KW-0808">Transferase</keyword>
<keyword id="KW-0862">Zinc</keyword>
<gene>
    <name evidence="1" type="primary">rpoC</name>
</gene>
<reference key="1">
    <citation type="journal article" date="1996" name="Int. J. Syst. Bacteriol.">
        <title>Analysis of the beta' subunit of DNA-dependent RNA polymerase does not support the hypothesis inferred from 16S rRNA analysis that Oenococcus oeni (formerly Leuconostoc oenos) is a tachytelic (fast-evolving) bacterium.</title>
        <authorList>
            <person name="Morse R."/>
            <person name="Collins M.D."/>
            <person name="O'Hanlon K."/>
            <person name="Wallbanks S."/>
            <person name="Richardson P.T."/>
        </authorList>
    </citation>
    <scope>NUCLEOTIDE SEQUENCE [GENOMIC DNA]</scope>
    <source>
        <strain>ATCC 51523 / DSM 7378 / CCUG 33494 / LMG 15125 / NBRC 15553 / NCFB 2973 / LV346</strain>
    </source>
</reference>
<organism>
    <name type="scientific">Weissella hellenica</name>
    <dbReference type="NCBI Taxonomy" id="46256"/>
    <lineage>
        <taxon>Bacteria</taxon>
        <taxon>Bacillati</taxon>
        <taxon>Bacillota</taxon>
        <taxon>Bacilli</taxon>
        <taxon>Lactobacillales</taxon>
        <taxon>Lactobacillaceae</taxon>
        <taxon>Weissella</taxon>
    </lineage>
</organism>
<dbReference type="EC" id="2.7.7.6" evidence="1"/>
<dbReference type="EMBL" id="X96470">
    <property type="protein sequence ID" value="CAA65322.1"/>
    <property type="molecule type" value="Genomic_DNA"/>
</dbReference>
<dbReference type="SMR" id="P96177"/>
<dbReference type="STRING" id="46256.GA0061075_10231"/>
<dbReference type="eggNOG" id="COG0086">
    <property type="taxonomic scope" value="Bacteria"/>
</dbReference>
<dbReference type="GO" id="GO:0000428">
    <property type="term" value="C:DNA-directed RNA polymerase complex"/>
    <property type="evidence" value="ECO:0007669"/>
    <property type="project" value="UniProtKB-KW"/>
</dbReference>
<dbReference type="GO" id="GO:0003677">
    <property type="term" value="F:DNA binding"/>
    <property type="evidence" value="ECO:0007669"/>
    <property type="project" value="InterPro"/>
</dbReference>
<dbReference type="GO" id="GO:0003899">
    <property type="term" value="F:DNA-directed RNA polymerase activity"/>
    <property type="evidence" value="ECO:0007669"/>
    <property type="project" value="UniProtKB-EC"/>
</dbReference>
<dbReference type="GO" id="GO:0046872">
    <property type="term" value="F:metal ion binding"/>
    <property type="evidence" value="ECO:0007669"/>
    <property type="project" value="UniProtKB-KW"/>
</dbReference>
<dbReference type="GO" id="GO:0006351">
    <property type="term" value="P:DNA-templated transcription"/>
    <property type="evidence" value="ECO:0007669"/>
    <property type="project" value="InterPro"/>
</dbReference>
<dbReference type="CDD" id="cd02655">
    <property type="entry name" value="RNAP_beta'_C"/>
    <property type="match status" value="1"/>
</dbReference>
<dbReference type="CDD" id="cd01609">
    <property type="entry name" value="RNAP_beta'_N"/>
    <property type="match status" value="1"/>
</dbReference>
<dbReference type="Gene3D" id="1.10.132.30">
    <property type="match status" value="1"/>
</dbReference>
<dbReference type="Gene3D" id="1.10.1790.20">
    <property type="match status" value="1"/>
</dbReference>
<dbReference type="Gene3D" id="1.10.40.90">
    <property type="match status" value="1"/>
</dbReference>
<dbReference type="Gene3D" id="2.40.40.20">
    <property type="match status" value="1"/>
</dbReference>
<dbReference type="Gene3D" id="2.40.50.100">
    <property type="match status" value="1"/>
</dbReference>
<dbReference type="Gene3D" id="4.10.860.120">
    <property type="entry name" value="RNA polymerase II, clamp domain"/>
    <property type="match status" value="1"/>
</dbReference>
<dbReference type="Gene3D" id="1.10.274.100">
    <property type="entry name" value="RNA polymerase Rpb1, domain 3"/>
    <property type="match status" value="1"/>
</dbReference>
<dbReference type="HAMAP" id="MF_01322">
    <property type="entry name" value="RNApol_bact_RpoC"/>
    <property type="match status" value="1"/>
</dbReference>
<dbReference type="InterPro" id="IPR045867">
    <property type="entry name" value="DNA-dir_RpoC_beta_prime"/>
</dbReference>
<dbReference type="InterPro" id="IPR012754">
    <property type="entry name" value="DNA-dir_RpoC_beta_prime_bact"/>
</dbReference>
<dbReference type="InterPro" id="IPR000722">
    <property type="entry name" value="RNA_pol_asu"/>
</dbReference>
<dbReference type="InterPro" id="IPR006592">
    <property type="entry name" value="RNA_pol_N"/>
</dbReference>
<dbReference type="InterPro" id="IPR007080">
    <property type="entry name" value="RNA_pol_Rpb1_1"/>
</dbReference>
<dbReference type="InterPro" id="IPR007066">
    <property type="entry name" value="RNA_pol_Rpb1_3"/>
</dbReference>
<dbReference type="InterPro" id="IPR042102">
    <property type="entry name" value="RNA_pol_Rpb1_3_sf"/>
</dbReference>
<dbReference type="InterPro" id="IPR007083">
    <property type="entry name" value="RNA_pol_Rpb1_4"/>
</dbReference>
<dbReference type="InterPro" id="IPR007081">
    <property type="entry name" value="RNA_pol_Rpb1_5"/>
</dbReference>
<dbReference type="InterPro" id="IPR044893">
    <property type="entry name" value="RNA_pol_Rpb1_clamp_domain"/>
</dbReference>
<dbReference type="InterPro" id="IPR038120">
    <property type="entry name" value="Rpb1_funnel_sf"/>
</dbReference>
<dbReference type="NCBIfam" id="TIGR02386">
    <property type="entry name" value="rpoC_TIGR"/>
    <property type="match status" value="1"/>
</dbReference>
<dbReference type="PANTHER" id="PTHR19376">
    <property type="entry name" value="DNA-DIRECTED RNA POLYMERASE"/>
    <property type="match status" value="1"/>
</dbReference>
<dbReference type="PANTHER" id="PTHR19376:SF54">
    <property type="entry name" value="DNA-DIRECTED RNA POLYMERASE SUBUNIT BETA"/>
    <property type="match status" value="1"/>
</dbReference>
<dbReference type="Pfam" id="PF04997">
    <property type="entry name" value="RNA_pol_Rpb1_1"/>
    <property type="match status" value="1"/>
</dbReference>
<dbReference type="Pfam" id="PF00623">
    <property type="entry name" value="RNA_pol_Rpb1_2"/>
    <property type="match status" value="1"/>
</dbReference>
<dbReference type="Pfam" id="PF04983">
    <property type="entry name" value="RNA_pol_Rpb1_3"/>
    <property type="match status" value="1"/>
</dbReference>
<dbReference type="Pfam" id="PF05000">
    <property type="entry name" value="RNA_pol_Rpb1_4"/>
    <property type="match status" value="1"/>
</dbReference>
<dbReference type="Pfam" id="PF04998">
    <property type="entry name" value="RNA_pol_Rpb1_5"/>
    <property type="match status" value="1"/>
</dbReference>
<dbReference type="SMART" id="SM00663">
    <property type="entry name" value="RPOLA_N"/>
    <property type="match status" value="1"/>
</dbReference>
<dbReference type="SUPFAM" id="SSF64484">
    <property type="entry name" value="beta and beta-prime subunits of DNA dependent RNA-polymerase"/>
    <property type="match status" value="1"/>
</dbReference>
<comment type="function">
    <text evidence="1">DNA-dependent RNA polymerase catalyzes the transcription of DNA into RNA using the four ribonucleoside triphosphates as substrates.</text>
</comment>
<comment type="catalytic activity">
    <reaction evidence="1">
        <text>RNA(n) + a ribonucleoside 5'-triphosphate = RNA(n+1) + diphosphate</text>
        <dbReference type="Rhea" id="RHEA:21248"/>
        <dbReference type="Rhea" id="RHEA-COMP:14527"/>
        <dbReference type="Rhea" id="RHEA-COMP:17342"/>
        <dbReference type="ChEBI" id="CHEBI:33019"/>
        <dbReference type="ChEBI" id="CHEBI:61557"/>
        <dbReference type="ChEBI" id="CHEBI:140395"/>
        <dbReference type="EC" id="2.7.7.6"/>
    </reaction>
</comment>
<comment type="cofactor">
    <cofactor evidence="1">
        <name>Mg(2+)</name>
        <dbReference type="ChEBI" id="CHEBI:18420"/>
    </cofactor>
    <text evidence="1">Binds 1 Mg(2+) ion per subunit.</text>
</comment>
<comment type="cofactor">
    <cofactor evidence="1">
        <name>Zn(2+)</name>
        <dbReference type="ChEBI" id="CHEBI:29105"/>
    </cofactor>
    <text evidence="1">Binds 1 Zn(2+) ion per subunit.</text>
</comment>
<comment type="subunit">
    <text evidence="1">The RNAP catalytic core consists of 2 alpha, 1 beta, 1 beta' and 1 omega subunit. When a sigma factor is associated with the core the holoenzyme is formed, which can initiate transcription.</text>
</comment>
<comment type="similarity">
    <text evidence="1 2">Belongs to the RNA polymerase beta' chain family.</text>
</comment>
<proteinExistence type="inferred from homology"/>